<gene>
    <name type="primary">ROX3</name>
    <name type="synonym">MED19</name>
    <name type="ordered locus">CAGL0M09515g</name>
</gene>
<keyword id="KW-0010">Activator</keyword>
<keyword id="KW-0539">Nucleus</keyword>
<keyword id="KW-1185">Reference proteome</keyword>
<keyword id="KW-0804">Transcription</keyword>
<keyword id="KW-0805">Transcription regulation</keyword>
<sequence length="201" mass="23358">MEMEEFAPSYYYYVEPEMGYQPQQPNPMEDLITVYHLDDISRQVARTNEDGTKAVKLRKSYKNQITDLSGKFSSIPNRENRKGGEIAHILFQNNPDMMNQVHRSPDMTDEQWREALMNVDASLFQAPNMDWEVCQSVLSQFDRSYPTEFQNDPNFHVDDLAFDLDGTGKSNAKKRKNRSNGSSMATPNSEMQDDVKRRRLE</sequence>
<reference key="1">
    <citation type="journal article" date="2004" name="Nature">
        <title>Genome evolution in yeasts.</title>
        <authorList>
            <person name="Dujon B."/>
            <person name="Sherman D."/>
            <person name="Fischer G."/>
            <person name="Durrens P."/>
            <person name="Casaregola S."/>
            <person name="Lafontaine I."/>
            <person name="de Montigny J."/>
            <person name="Marck C."/>
            <person name="Neuveglise C."/>
            <person name="Talla E."/>
            <person name="Goffard N."/>
            <person name="Frangeul L."/>
            <person name="Aigle M."/>
            <person name="Anthouard V."/>
            <person name="Babour A."/>
            <person name="Barbe V."/>
            <person name="Barnay S."/>
            <person name="Blanchin S."/>
            <person name="Beckerich J.-M."/>
            <person name="Beyne E."/>
            <person name="Bleykasten C."/>
            <person name="Boisrame A."/>
            <person name="Boyer J."/>
            <person name="Cattolico L."/>
            <person name="Confanioleri F."/>
            <person name="de Daruvar A."/>
            <person name="Despons L."/>
            <person name="Fabre E."/>
            <person name="Fairhead C."/>
            <person name="Ferry-Dumazet H."/>
            <person name="Groppi A."/>
            <person name="Hantraye F."/>
            <person name="Hennequin C."/>
            <person name="Jauniaux N."/>
            <person name="Joyet P."/>
            <person name="Kachouri R."/>
            <person name="Kerrest A."/>
            <person name="Koszul R."/>
            <person name="Lemaire M."/>
            <person name="Lesur I."/>
            <person name="Ma L."/>
            <person name="Muller H."/>
            <person name="Nicaud J.-M."/>
            <person name="Nikolski M."/>
            <person name="Oztas S."/>
            <person name="Ozier-Kalogeropoulos O."/>
            <person name="Pellenz S."/>
            <person name="Potier S."/>
            <person name="Richard G.-F."/>
            <person name="Straub M.-L."/>
            <person name="Suleau A."/>
            <person name="Swennen D."/>
            <person name="Tekaia F."/>
            <person name="Wesolowski-Louvel M."/>
            <person name="Westhof E."/>
            <person name="Wirth B."/>
            <person name="Zeniou-Meyer M."/>
            <person name="Zivanovic Y."/>
            <person name="Bolotin-Fukuhara M."/>
            <person name="Thierry A."/>
            <person name="Bouchier C."/>
            <person name="Caudron B."/>
            <person name="Scarpelli C."/>
            <person name="Gaillardin C."/>
            <person name="Weissenbach J."/>
            <person name="Wincker P."/>
            <person name="Souciet J.-L."/>
        </authorList>
    </citation>
    <scope>NUCLEOTIDE SEQUENCE [LARGE SCALE GENOMIC DNA]</scope>
    <source>
        <strain>ATCC 2001 / BCRC 20586 / JCM 3761 / NBRC 0622 / NRRL Y-65 / CBS 138</strain>
    </source>
</reference>
<comment type="function">
    <text evidence="1">Component of the Mediator complex, a coactivator involved in the regulated transcription of nearly all RNA polymerase II-dependent genes. Mediator functions as a bridge to convey information from gene-specific regulatory proteins to the basal RNA polymerase II transcription machinery. Mediator is recruited to promoters by direct interactions with regulatory proteins and serves as a scaffold for the assembly of a functional preinitiation complex with RNA polymerase II and the general transcription factors (By similarity).</text>
</comment>
<comment type="subunit">
    <text evidence="1">Component of the Mediator complex.</text>
</comment>
<comment type="subcellular location">
    <subcellularLocation>
        <location evidence="1">Nucleus</location>
    </subcellularLocation>
</comment>
<comment type="similarity">
    <text evidence="3">Belongs to the Mediator complex subunit 19 family.</text>
</comment>
<accession>Q6FJ36</accession>
<dbReference type="EMBL" id="CR380959">
    <property type="protein sequence ID" value="CAG62736.1"/>
    <property type="molecule type" value="Genomic_DNA"/>
</dbReference>
<dbReference type="RefSeq" id="XP_449758.1">
    <property type="nucleotide sequence ID" value="XM_449758.1"/>
</dbReference>
<dbReference type="SMR" id="Q6FJ36"/>
<dbReference type="FunCoup" id="Q6FJ36">
    <property type="interactions" value="97"/>
</dbReference>
<dbReference type="STRING" id="284593.Q6FJ36"/>
<dbReference type="EnsemblFungi" id="CAGL0M09515g-T">
    <property type="protein sequence ID" value="CAGL0M09515g-T-p1"/>
    <property type="gene ID" value="CAGL0M09515g"/>
</dbReference>
<dbReference type="KEGG" id="cgr:2891322"/>
<dbReference type="CGD" id="CAL0136373">
    <property type="gene designation" value="CAGL0M09515g"/>
</dbReference>
<dbReference type="VEuPathDB" id="FungiDB:B1J91_M09515g"/>
<dbReference type="VEuPathDB" id="FungiDB:CAGL0M09515g"/>
<dbReference type="eggNOG" id="ENOG502QXG3">
    <property type="taxonomic scope" value="Eukaryota"/>
</dbReference>
<dbReference type="HOGENOM" id="CLU_117719_0_0_1"/>
<dbReference type="InParanoid" id="Q6FJ36"/>
<dbReference type="OMA" id="SYPTEFQ"/>
<dbReference type="Proteomes" id="UP000002428">
    <property type="component" value="Chromosome M"/>
</dbReference>
<dbReference type="GO" id="GO:0070847">
    <property type="term" value="C:core mediator complex"/>
    <property type="evidence" value="ECO:0007669"/>
    <property type="project" value="EnsemblFungi"/>
</dbReference>
<dbReference type="GO" id="GO:0016592">
    <property type="term" value="C:mediator complex"/>
    <property type="evidence" value="ECO:0007669"/>
    <property type="project" value="InterPro"/>
</dbReference>
<dbReference type="GO" id="GO:0003713">
    <property type="term" value="F:transcription coactivator activity"/>
    <property type="evidence" value="ECO:0007669"/>
    <property type="project" value="EnsemblFungi"/>
</dbReference>
<dbReference type="GO" id="GO:0000122">
    <property type="term" value="P:negative regulation of transcription by RNA polymerase II"/>
    <property type="evidence" value="ECO:0007669"/>
    <property type="project" value="EnsemblFungi"/>
</dbReference>
<dbReference type="GO" id="GO:0032968">
    <property type="term" value="P:positive regulation of transcription elongation by RNA polymerase II"/>
    <property type="evidence" value="ECO:0007669"/>
    <property type="project" value="EnsemblFungi"/>
</dbReference>
<dbReference type="GO" id="GO:0060261">
    <property type="term" value="P:positive regulation of transcription initiation by RNA polymerase II"/>
    <property type="evidence" value="ECO:0007669"/>
    <property type="project" value="EnsemblFungi"/>
</dbReference>
<dbReference type="GO" id="GO:0051123">
    <property type="term" value="P:RNA polymerase II preinitiation complex assembly"/>
    <property type="evidence" value="ECO:0007669"/>
    <property type="project" value="EnsemblFungi"/>
</dbReference>
<dbReference type="GO" id="GO:0001113">
    <property type="term" value="P:transcription open complex formation at RNA polymerase II promoter"/>
    <property type="evidence" value="ECO:0007669"/>
    <property type="project" value="EnsemblFungi"/>
</dbReference>
<dbReference type="InterPro" id="IPR013942">
    <property type="entry name" value="Mediator_Med19_fun"/>
</dbReference>
<dbReference type="PANTHER" id="PTHR28270">
    <property type="entry name" value="MEDIATOR OF RNA POLYMERASE II TRANSCRIPTION SUBUNIT 19"/>
    <property type="match status" value="1"/>
</dbReference>
<dbReference type="PANTHER" id="PTHR28270:SF1">
    <property type="entry name" value="MEDIATOR OF RNA POLYMERASE II TRANSCRIPTION SUBUNIT 19"/>
    <property type="match status" value="1"/>
</dbReference>
<dbReference type="Pfam" id="PF08633">
    <property type="entry name" value="Rox3"/>
    <property type="match status" value="1"/>
</dbReference>
<evidence type="ECO:0000250" key="1"/>
<evidence type="ECO:0000256" key="2">
    <source>
        <dbReference type="SAM" id="MobiDB-lite"/>
    </source>
</evidence>
<evidence type="ECO:0000305" key="3"/>
<protein>
    <recommendedName>
        <fullName>Mediator of RNA polymerase II transcription subunit 19</fullName>
    </recommendedName>
    <alternativeName>
        <fullName>Mediator complex subunit 19</fullName>
    </alternativeName>
</protein>
<organism>
    <name type="scientific">Candida glabrata (strain ATCC 2001 / BCRC 20586 / JCM 3761 / NBRC 0622 / NRRL Y-65 / CBS 138)</name>
    <name type="common">Yeast</name>
    <name type="synonym">Nakaseomyces glabratus</name>
    <dbReference type="NCBI Taxonomy" id="284593"/>
    <lineage>
        <taxon>Eukaryota</taxon>
        <taxon>Fungi</taxon>
        <taxon>Dikarya</taxon>
        <taxon>Ascomycota</taxon>
        <taxon>Saccharomycotina</taxon>
        <taxon>Saccharomycetes</taxon>
        <taxon>Saccharomycetales</taxon>
        <taxon>Saccharomycetaceae</taxon>
        <taxon>Nakaseomyces</taxon>
    </lineage>
</organism>
<proteinExistence type="inferred from homology"/>
<name>MED19_CANGA</name>
<feature type="chain" id="PRO_0000304776" description="Mediator of RNA polymerase II transcription subunit 19">
    <location>
        <begin position="1"/>
        <end position="201"/>
    </location>
</feature>
<feature type="region of interest" description="Disordered" evidence="2">
    <location>
        <begin position="166"/>
        <end position="201"/>
    </location>
</feature>